<feature type="chain" id="PRO_0000348869" description="tRNA-cytidine(32) 2-sulfurtransferase">
    <location>
        <begin position="1"/>
        <end position="300"/>
    </location>
</feature>
<feature type="short sequence motif" description="PP-loop motif" evidence="1">
    <location>
        <begin position="57"/>
        <end position="62"/>
    </location>
</feature>
<feature type="binding site" evidence="1">
    <location>
        <position position="132"/>
    </location>
    <ligand>
        <name>[4Fe-4S] cluster</name>
        <dbReference type="ChEBI" id="CHEBI:49883"/>
    </ligand>
</feature>
<feature type="binding site" evidence="1">
    <location>
        <position position="135"/>
    </location>
    <ligand>
        <name>[4Fe-4S] cluster</name>
        <dbReference type="ChEBI" id="CHEBI:49883"/>
    </ligand>
</feature>
<feature type="binding site" evidence="1">
    <location>
        <position position="223"/>
    </location>
    <ligand>
        <name>[4Fe-4S] cluster</name>
        <dbReference type="ChEBI" id="CHEBI:49883"/>
    </ligand>
</feature>
<sequence>MTAVLPLPLPLADPAPRTPRLQREPLRLAKRLRHAVGQAIADFGMIAPGDKVMVCLSGGKDSYTLLDMLLQLQRSAPVPFTLVAVNLDQKQPDFPADVLPTYLRAQQVPFDIIEQDTYSVVSRVIPQGKTMCSLCSRLRRGALYAYAQAHGVTKIALGHHRDDIVATFFMNLFHHARLAAMAPKLRSDDGAHVVIRPLAYVREADIAAYAQARHFPIIPCNLCGSQENLQRQQVGRMLQQWDREQPGRVDQIARALGDVRPEQLADRTLFDFPGLGGGADAPLPDAAGWLAGSAAEHARD</sequence>
<keyword id="KW-0004">4Fe-4S</keyword>
<keyword id="KW-0067">ATP-binding</keyword>
<keyword id="KW-0963">Cytoplasm</keyword>
<keyword id="KW-0408">Iron</keyword>
<keyword id="KW-0411">Iron-sulfur</keyword>
<keyword id="KW-0460">Magnesium</keyword>
<keyword id="KW-0479">Metal-binding</keyword>
<keyword id="KW-0547">Nucleotide-binding</keyword>
<keyword id="KW-1185">Reference proteome</keyword>
<keyword id="KW-0694">RNA-binding</keyword>
<keyword id="KW-0808">Transferase</keyword>
<keyword id="KW-0819">tRNA processing</keyword>
<keyword id="KW-0820">tRNA-binding</keyword>
<comment type="function">
    <text evidence="1">Catalyzes the ATP-dependent 2-thiolation of cytidine in position 32 of tRNA, to form 2-thiocytidine (s(2)C32). The sulfur atoms are provided by the cysteine/cysteine desulfurase (IscS) system.</text>
</comment>
<comment type="catalytic activity">
    <reaction evidence="1">
        <text>cytidine(32) in tRNA + S-sulfanyl-L-cysteinyl-[cysteine desulfurase] + AH2 + ATP = 2-thiocytidine(32) in tRNA + L-cysteinyl-[cysteine desulfurase] + A + AMP + diphosphate + H(+)</text>
        <dbReference type="Rhea" id="RHEA:57048"/>
        <dbReference type="Rhea" id="RHEA-COMP:10288"/>
        <dbReference type="Rhea" id="RHEA-COMP:12157"/>
        <dbReference type="Rhea" id="RHEA-COMP:12158"/>
        <dbReference type="Rhea" id="RHEA-COMP:14821"/>
        <dbReference type="ChEBI" id="CHEBI:13193"/>
        <dbReference type="ChEBI" id="CHEBI:15378"/>
        <dbReference type="ChEBI" id="CHEBI:17499"/>
        <dbReference type="ChEBI" id="CHEBI:29950"/>
        <dbReference type="ChEBI" id="CHEBI:30616"/>
        <dbReference type="ChEBI" id="CHEBI:33019"/>
        <dbReference type="ChEBI" id="CHEBI:61963"/>
        <dbReference type="ChEBI" id="CHEBI:82748"/>
        <dbReference type="ChEBI" id="CHEBI:141453"/>
        <dbReference type="ChEBI" id="CHEBI:456215"/>
    </reaction>
    <physiologicalReaction direction="left-to-right" evidence="1">
        <dbReference type="Rhea" id="RHEA:57049"/>
    </physiologicalReaction>
</comment>
<comment type="cofactor">
    <cofactor evidence="1">
        <name>Mg(2+)</name>
        <dbReference type="ChEBI" id="CHEBI:18420"/>
    </cofactor>
</comment>
<comment type="cofactor">
    <cofactor evidence="1">
        <name>[4Fe-4S] cluster</name>
        <dbReference type="ChEBI" id="CHEBI:49883"/>
    </cofactor>
    <text evidence="1">Binds 1 [4Fe-4S] cluster per subunit. The cluster is chelated by three Cys residues, the fourth Fe has a free coordination site that may bind a sulfur atom transferred from the persulfide of IscS.</text>
</comment>
<comment type="pathway">
    <text evidence="1">tRNA modification.</text>
</comment>
<comment type="subunit">
    <text evidence="1">Homodimer.</text>
</comment>
<comment type="subcellular location">
    <subcellularLocation>
        <location evidence="1">Cytoplasm</location>
    </subcellularLocation>
</comment>
<comment type="miscellaneous">
    <text evidence="1">The thiolation reaction likely consists of two steps: a first activation step by ATP to form an adenylated intermediate of the target base of tRNA, and a second nucleophilic substitution step of the sulfur (S) atom supplied by the hydrosulfide attached to the Fe-S cluster.</text>
</comment>
<comment type="similarity">
    <text evidence="1">Belongs to the TtcA family.</text>
</comment>
<evidence type="ECO:0000255" key="1">
    <source>
        <dbReference type="HAMAP-Rule" id="MF_01850"/>
    </source>
</evidence>
<organism>
    <name type="scientific">Xanthomonas campestris pv. campestris (strain ATCC 33913 / DSM 3586 / NCPPB 528 / LMG 568 / P 25)</name>
    <dbReference type="NCBI Taxonomy" id="190485"/>
    <lineage>
        <taxon>Bacteria</taxon>
        <taxon>Pseudomonadati</taxon>
        <taxon>Pseudomonadota</taxon>
        <taxon>Gammaproteobacteria</taxon>
        <taxon>Lysobacterales</taxon>
        <taxon>Lysobacteraceae</taxon>
        <taxon>Xanthomonas</taxon>
    </lineage>
</organism>
<proteinExistence type="inferred from homology"/>
<protein>
    <recommendedName>
        <fullName evidence="1">tRNA-cytidine(32) 2-sulfurtransferase</fullName>
        <ecNumber evidence="1">2.8.1.-</ecNumber>
    </recommendedName>
    <alternativeName>
        <fullName evidence="1">Two-thiocytidine biosynthesis protein A</fullName>
    </alternativeName>
    <alternativeName>
        <fullName evidence="1">tRNA 2-thiocytidine biosynthesis protein TtcA</fullName>
    </alternativeName>
</protein>
<accession>Q8P3H2</accession>
<gene>
    <name evidence="1" type="primary">ttcA</name>
    <name type="ordered locus">XCC4099</name>
</gene>
<reference key="1">
    <citation type="journal article" date="2002" name="Nature">
        <title>Comparison of the genomes of two Xanthomonas pathogens with differing host specificities.</title>
        <authorList>
            <person name="da Silva A.C.R."/>
            <person name="Ferro J.A."/>
            <person name="Reinach F.C."/>
            <person name="Farah C.S."/>
            <person name="Furlan L.R."/>
            <person name="Quaggio R.B."/>
            <person name="Monteiro-Vitorello C.B."/>
            <person name="Van Sluys M.A."/>
            <person name="Almeida N.F. Jr."/>
            <person name="Alves L.M.C."/>
            <person name="do Amaral A.M."/>
            <person name="Bertolini M.C."/>
            <person name="Camargo L.E.A."/>
            <person name="Camarotte G."/>
            <person name="Cannavan F."/>
            <person name="Cardozo J."/>
            <person name="Chambergo F."/>
            <person name="Ciapina L.P."/>
            <person name="Cicarelli R.M.B."/>
            <person name="Coutinho L.L."/>
            <person name="Cursino-Santos J.R."/>
            <person name="El-Dorry H."/>
            <person name="Faria J.B."/>
            <person name="Ferreira A.J.S."/>
            <person name="Ferreira R.C.C."/>
            <person name="Ferro M.I.T."/>
            <person name="Formighieri E.F."/>
            <person name="Franco M.C."/>
            <person name="Greggio C.C."/>
            <person name="Gruber A."/>
            <person name="Katsuyama A.M."/>
            <person name="Kishi L.T."/>
            <person name="Leite R.P."/>
            <person name="Lemos E.G.M."/>
            <person name="Lemos M.V.F."/>
            <person name="Locali E.C."/>
            <person name="Machado M.A."/>
            <person name="Madeira A.M.B.N."/>
            <person name="Martinez-Rossi N.M."/>
            <person name="Martins E.C."/>
            <person name="Meidanis J."/>
            <person name="Menck C.F.M."/>
            <person name="Miyaki C.Y."/>
            <person name="Moon D.H."/>
            <person name="Moreira L.M."/>
            <person name="Novo M.T.M."/>
            <person name="Okura V.K."/>
            <person name="Oliveira M.C."/>
            <person name="Oliveira V.R."/>
            <person name="Pereira H.A."/>
            <person name="Rossi A."/>
            <person name="Sena J.A.D."/>
            <person name="Silva C."/>
            <person name="de Souza R.F."/>
            <person name="Spinola L.A.F."/>
            <person name="Takita M.A."/>
            <person name="Tamura R.E."/>
            <person name="Teixeira E.C."/>
            <person name="Tezza R.I.D."/>
            <person name="Trindade dos Santos M."/>
            <person name="Truffi D."/>
            <person name="Tsai S.M."/>
            <person name="White F.F."/>
            <person name="Setubal J.C."/>
            <person name="Kitajima J.P."/>
        </authorList>
    </citation>
    <scope>NUCLEOTIDE SEQUENCE [LARGE SCALE GENOMIC DNA]</scope>
    <source>
        <strain>ATCC 33913 / DSM 3586 / NCPPB 528 / LMG 568 / P 25</strain>
    </source>
</reference>
<name>TTCA_XANCP</name>
<dbReference type="EC" id="2.8.1.-" evidence="1"/>
<dbReference type="EMBL" id="AE008922">
    <property type="protein sequence ID" value="AAM43320.1"/>
    <property type="molecule type" value="Genomic_DNA"/>
</dbReference>
<dbReference type="RefSeq" id="NP_639438.1">
    <property type="nucleotide sequence ID" value="NC_003902.1"/>
</dbReference>
<dbReference type="RefSeq" id="WP_011039168.1">
    <property type="nucleotide sequence ID" value="NC_003902.1"/>
</dbReference>
<dbReference type="SMR" id="Q8P3H2"/>
<dbReference type="STRING" id="190485.XCC4099"/>
<dbReference type="EnsemblBacteria" id="AAM43320">
    <property type="protein sequence ID" value="AAM43320"/>
    <property type="gene ID" value="XCC4099"/>
</dbReference>
<dbReference type="KEGG" id="xcc:XCC4099"/>
<dbReference type="PATRIC" id="fig|190485.4.peg.4393"/>
<dbReference type="eggNOG" id="COG0037">
    <property type="taxonomic scope" value="Bacteria"/>
</dbReference>
<dbReference type="HOGENOM" id="CLU_026481_0_1_6"/>
<dbReference type="OrthoDB" id="9801054at2"/>
<dbReference type="Proteomes" id="UP000001010">
    <property type="component" value="Chromosome"/>
</dbReference>
<dbReference type="GO" id="GO:0005829">
    <property type="term" value="C:cytosol"/>
    <property type="evidence" value="ECO:0000318"/>
    <property type="project" value="GO_Central"/>
</dbReference>
<dbReference type="GO" id="GO:0051539">
    <property type="term" value="F:4 iron, 4 sulfur cluster binding"/>
    <property type="evidence" value="ECO:0007669"/>
    <property type="project" value="UniProtKB-UniRule"/>
</dbReference>
<dbReference type="GO" id="GO:0005524">
    <property type="term" value="F:ATP binding"/>
    <property type="evidence" value="ECO:0007669"/>
    <property type="project" value="UniProtKB-UniRule"/>
</dbReference>
<dbReference type="GO" id="GO:0000287">
    <property type="term" value="F:magnesium ion binding"/>
    <property type="evidence" value="ECO:0007669"/>
    <property type="project" value="UniProtKB-UniRule"/>
</dbReference>
<dbReference type="GO" id="GO:0016783">
    <property type="term" value="F:sulfurtransferase activity"/>
    <property type="evidence" value="ECO:0000318"/>
    <property type="project" value="GO_Central"/>
</dbReference>
<dbReference type="GO" id="GO:0000049">
    <property type="term" value="F:tRNA binding"/>
    <property type="evidence" value="ECO:0007669"/>
    <property type="project" value="UniProtKB-KW"/>
</dbReference>
<dbReference type="GO" id="GO:0034227">
    <property type="term" value="P:tRNA thio-modification"/>
    <property type="evidence" value="ECO:0000318"/>
    <property type="project" value="GO_Central"/>
</dbReference>
<dbReference type="CDD" id="cd24138">
    <property type="entry name" value="TtcA-like"/>
    <property type="match status" value="1"/>
</dbReference>
<dbReference type="Gene3D" id="3.40.50.620">
    <property type="entry name" value="HUPs"/>
    <property type="match status" value="1"/>
</dbReference>
<dbReference type="HAMAP" id="MF_01850">
    <property type="entry name" value="TtcA"/>
    <property type="match status" value="1"/>
</dbReference>
<dbReference type="InterPro" id="IPR014729">
    <property type="entry name" value="Rossmann-like_a/b/a_fold"/>
</dbReference>
<dbReference type="InterPro" id="IPR011063">
    <property type="entry name" value="TilS/TtcA_N"/>
</dbReference>
<dbReference type="InterPro" id="IPR012089">
    <property type="entry name" value="tRNA_Cyd_32_2_STrfase"/>
</dbReference>
<dbReference type="InterPro" id="IPR035107">
    <property type="entry name" value="tRNA_thiolation_TtcA_Ctu1"/>
</dbReference>
<dbReference type="NCBIfam" id="NF007972">
    <property type="entry name" value="PRK10696.1"/>
    <property type="match status" value="1"/>
</dbReference>
<dbReference type="PANTHER" id="PTHR43686:SF1">
    <property type="entry name" value="AMINOTRAN_5 DOMAIN-CONTAINING PROTEIN"/>
    <property type="match status" value="1"/>
</dbReference>
<dbReference type="PANTHER" id="PTHR43686">
    <property type="entry name" value="SULFURTRANSFERASE-RELATED"/>
    <property type="match status" value="1"/>
</dbReference>
<dbReference type="Pfam" id="PF01171">
    <property type="entry name" value="ATP_bind_3"/>
    <property type="match status" value="1"/>
</dbReference>
<dbReference type="PIRSF" id="PIRSF004976">
    <property type="entry name" value="ATPase_YdaO"/>
    <property type="match status" value="1"/>
</dbReference>
<dbReference type="SUPFAM" id="SSF52402">
    <property type="entry name" value="Adenine nucleotide alpha hydrolases-like"/>
    <property type="match status" value="1"/>
</dbReference>